<gene>
    <name evidence="1" type="primary">ecfA1</name>
    <name type="synonym">cbiO1</name>
    <name type="ordered locus">STER_1985</name>
</gene>
<evidence type="ECO:0000255" key="1">
    <source>
        <dbReference type="HAMAP-Rule" id="MF_01710"/>
    </source>
</evidence>
<reference key="1">
    <citation type="journal article" date="2006" name="Proc. Natl. Acad. Sci. U.S.A.">
        <title>Comparative genomics of the lactic acid bacteria.</title>
        <authorList>
            <person name="Makarova K.S."/>
            <person name="Slesarev A."/>
            <person name="Wolf Y.I."/>
            <person name="Sorokin A."/>
            <person name="Mirkin B."/>
            <person name="Koonin E.V."/>
            <person name="Pavlov A."/>
            <person name="Pavlova N."/>
            <person name="Karamychev V."/>
            <person name="Polouchine N."/>
            <person name="Shakhova V."/>
            <person name="Grigoriev I."/>
            <person name="Lou Y."/>
            <person name="Rohksar D."/>
            <person name="Lucas S."/>
            <person name="Huang K."/>
            <person name="Goodstein D.M."/>
            <person name="Hawkins T."/>
            <person name="Plengvidhya V."/>
            <person name="Welker D."/>
            <person name="Hughes J."/>
            <person name="Goh Y."/>
            <person name="Benson A."/>
            <person name="Baldwin K."/>
            <person name="Lee J.-H."/>
            <person name="Diaz-Muniz I."/>
            <person name="Dosti B."/>
            <person name="Smeianov V."/>
            <person name="Wechter W."/>
            <person name="Barabote R."/>
            <person name="Lorca G."/>
            <person name="Altermann E."/>
            <person name="Barrangou R."/>
            <person name="Ganesan B."/>
            <person name="Xie Y."/>
            <person name="Rawsthorne H."/>
            <person name="Tamir D."/>
            <person name="Parker C."/>
            <person name="Breidt F."/>
            <person name="Broadbent J.R."/>
            <person name="Hutkins R."/>
            <person name="O'Sullivan D."/>
            <person name="Steele J."/>
            <person name="Unlu G."/>
            <person name="Saier M.H. Jr."/>
            <person name="Klaenhammer T."/>
            <person name="Richardson P."/>
            <person name="Kozyavkin S."/>
            <person name="Weimer B.C."/>
            <person name="Mills D.A."/>
        </authorList>
    </citation>
    <scope>NUCLEOTIDE SEQUENCE [LARGE SCALE GENOMIC DNA]</scope>
    <source>
        <strain>ATCC BAA-491 / LMD-9</strain>
    </source>
</reference>
<comment type="function">
    <text evidence="1">ATP-binding (A) component of a common energy-coupling factor (ECF) ABC-transporter complex. Unlike classic ABC transporters this ECF transporter provides the energy necessary to transport a number of different substrates.</text>
</comment>
<comment type="subunit">
    <text evidence="1">Forms a stable energy-coupling factor (ECF) transporter complex composed of 2 membrane-embedded substrate-binding proteins (S component), 2 ATP-binding proteins (A component) and 2 transmembrane proteins (T component).</text>
</comment>
<comment type="subcellular location">
    <subcellularLocation>
        <location evidence="1">Cell membrane</location>
        <topology evidence="1">Peripheral membrane protein</topology>
    </subcellularLocation>
</comment>
<comment type="similarity">
    <text evidence="1">Belongs to the ABC transporter superfamily. Energy-coupling factor EcfA family.</text>
</comment>
<feature type="chain" id="PRO_0000288012" description="Energy-coupling factor transporter ATP-binding protein EcfA1">
    <location>
        <begin position="1"/>
        <end position="276"/>
    </location>
</feature>
<feature type="domain" description="ABC transporter" evidence="1">
    <location>
        <begin position="2"/>
        <end position="237"/>
    </location>
</feature>
<feature type="binding site" evidence="1">
    <location>
        <begin position="37"/>
        <end position="44"/>
    </location>
    <ligand>
        <name>ATP</name>
        <dbReference type="ChEBI" id="CHEBI:30616"/>
    </ligand>
</feature>
<keyword id="KW-0067">ATP-binding</keyword>
<keyword id="KW-1003">Cell membrane</keyword>
<keyword id="KW-0472">Membrane</keyword>
<keyword id="KW-0547">Nucleotide-binding</keyword>
<keyword id="KW-1278">Translocase</keyword>
<keyword id="KW-0813">Transport</keyword>
<dbReference type="EC" id="7.-.-.-" evidence="1"/>
<dbReference type="EMBL" id="CP000419">
    <property type="protein sequence ID" value="ABJ67090.1"/>
    <property type="molecule type" value="Genomic_DNA"/>
</dbReference>
<dbReference type="RefSeq" id="WP_011681758.1">
    <property type="nucleotide sequence ID" value="NC_008532.1"/>
</dbReference>
<dbReference type="SMR" id="Q03I82"/>
<dbReference type="KEGG" id="ste:STER_1985"/>
<dbReference type="HOGENOM" id="CLU_000604_1_22_9"/>
<dbReference type="GO" id="GO:0043190">
    <property type="term" value="C:ATP-binding cassette (ABC) transporter complex"/>
    <property type="evidence" value="ECO:0007669"/>
    <property type="project" value="TreeGrafter"/>
</dbReference>
<dbReference type="GO" id="GO:0005524">
    <property type="term" value="F:ATP binding"/>
    <property type="evidence" value="ECO:0007669"/>
    <property type="project" value="UniProtKB-KW"/>
</dbReference>
<dbReference type="GO" id="GO:0016887">
    <property type="term" value="F:ATP hydrolysis activity"/>
    <property type="evidence" value="ECO:0007669"/>
    <property type="project" value="InterPro"/>
</dbReference>
<dbReference type="GO" id="GO:0042626">
    <property type="term" value="F:ATPase-coupled transmembrane transporter activity"/>
    <property type="evidence" value="ECO:0007669"/>
    <property type="project" value="TreeGrafter"/>
</dbReference>
<dbReference type="CDD" id="cd03225">
    <property type="entry name" value="ABC_cobalt_CbiO_domain1"/>
    <property type="match status" value="1"/>
</dbReference>
<dbReference type="FunFam" id="3.40.50.300:FF:000224">
    <property type="entry name" value="Energy-coupling factor transporter ATP-binding protein EcfA"/>
    <property type="match status" value="1"/>
</dbReference>
<dbReference type="Gene3D" id="3.40.50.300">
    <property type="entry name" value="P-loop containing nucleotide triphosphate hydrolases"/>
    <property type="match status" value="1"/>
</dbReference>
<dbReference type="InterPro" id="IPR003593">
    <property type="entry name" value="AAA+_ATPase"/>
</dbReference>
<dbReference type="InterPro" id="IPR003439">
    <property type="entry name" value="ABC_transporter-like_ATP-bd"/>
</dbReference>
<dbReference type="InterPro" id="IPR017871">
    <property type="entry name" value="ABC_transporter-like_CS"/>
</dbReference>
<dbReference type="InterPro" id="IPR015856">
    <property type="entry name" value="ABC_transpr_CbiO/EcfA_su"/>
</dbReference>
<dbReference type="InterPro" id="IPR050095">
    <property type="entry name" value="ECF_ABC_transporter_ATP-bd"/>
</dbReference>
<dbReference type="InterPro" id="IPR030947">
    <property type="entry name" value="EcfA_1"/>
</dbReference>
<dbReference type="InterPro" id="IPR027417">
    <property type="entry name" value="P-loop_NTPase"/>
</dbReference>
<dbReference type="NCBIfam" id="TIGR04520">
    <property type="entry name" value="ECF_ATPase_1"/>
    <property type="match status" value="1"/>
</dbReference>
<dbReference type="NCBIfam" id="NF010156">
    <property type="entry name" value="PRK13635.1"/>
    <property type="match status" value="1"/>
</dbReference>
<dbReference type="NCBIfam" id="NF010167">
    <property type="entry name" value="PRK13648.1"/>
    <property type="match status" value="1"/>
</dbReference>
<dbReference type="PANTHER" id="PTHR43553:SF24">
    <property type="entry name" value="ENERGY-COUPLING FACTOR TRANSPORTER ATP-BINDING PROTEIN ECFA1"/>
    <property type="match status" value="1"/>
</dbReference>
<dbReference type="PANTHER" id="PTHR43553">
    <property type="entry name" value="HEAVY METAL TRANSPORTER"/>
    <property type="match status" value="1"/>
</dbReference>
<dbReference type="Pfam" id="PF00005">
    <property type="entry name" value="ABC_tran"/>
    <property type="match status" value="1"/>
</dbReference>
<dbReference type="SMART" id="SM00382">
    <property type="entry name" value="AAA"/>
    <property type="match status" value="1"/>
</dbReference>
<dbReference type="SUPFAM" id="SSF52540">
    <property type="entry name" value="P-loop containing nucleoside triphosphate hydrolases"/>
    <property type="match status" value="1"/>
</dbReference>
<dbReference type="PROSITE" id="PS00211">
    <property type="entry name" value="ABC_TRANSPORTER_1"/>
    <property type="match status" value="1"/>
</dbReference>
<dbReference type="PROSITE" id="PS50893">
    <property type="entry name" value="ABC_TRANSPORTER_2"/>
    <property type="match status" value="1"/>
</dbReference>
<dbReference type="PROSITE" id="PS51246">
    <property type="entry name" value="CBIO"/>
    <property type="match status" value="1"/>
</dbReference>
<organism>
    <name type="scientific">Streptococcus thermophilus (strain ATCC BAA-491 / LMD-9)</name>
    <dbReference type="NCBI Taxonomy" id="322159"/>
    <lineage>
        <taxon>Bacteria</taxon>
        <taxon>Bacillati</taxon>
        <taxon>Bacillota</taxon>
        <taxon>Bacilli</taxon>
        <taxon>Lactobacillales</taxon>
        <taxon>Streptococcaceae</taxon>
        <taxon>Streptococcus</taxon>
    </lineage>
</organism>
<sequence length="276" mass="30889">MIEIKNLKFKYNQDQTSYTLNDVSFHVKRGEWLSIVGHNGSGKSTTARLIGGLLVADSGQIIVDGQELTEETVWDIRDKIGMVFQNPDNQFVGATVEDDVAFGLENKGLPYKEMVSRVQEALSFVGMMDFKDREPARLSGGQKQRVAIAGIIAMRPSILILDEATSMLDPEGRQELIQSIEDIRQQYGMTVLSITHDLDEVAMSNRVLVLKQGKVESISSPRELFSRGSELVDLGLDIPFSALLTQKLKNQGLIDCEGYLTEKELVEQLWEYLSKM</sequence>
<protein>
    <recommendedName>
        <fullName evidence="1">Energy-coupling factor transporter ATP-binding protein EcfA1</fullName>
        <shortName evidence="1">ECF transporter A component EcfA1</shortName>
        <ecNumber evidence="1">7.-.-.-</ecNumber>
    </recommendedName>
</protein>
<name>ECFA1_STRTD</name>
<proteinExistence type="inferred from homology"/>
<accession>Q03I82</accession>